<keyword id="KW-0131">Cell cycle</keyword>
<keyword id="KW-0132">Cell division</keyword>
<keyword id="KW-0133">Cell shape</keyword>
<keyword id="KW-0961">Cell wall biogenesis/degradation</keyword>
<keyword id="KW-0963">Cytoplasm</keyword>
<keyword id="KW-0573">Peptidoglycan synthesis</keyword>
<keyword id="KW-0670">Pyruvate</keyword>
<keyword id="KW-0808">Transferase</keyword>
<feature type="chain" id="PRO_1000094732" description="UDP-N-acetylglucosamine 1-carboxyvinyltransferase">
    <location>
        <begin position="1"/>
        <end position="425"/>
    </location>
</feature>
<feature type="active site" description="Proton donor" evidence="1">
    <location>
        <position position="124"/>
    </location>
</feature>
<feature type="binding site" evidence="1">
    <location>
        <begin position="23"/>
        <end position="24"/>
    </location>
    <ligand>
        <name>phosphoenolpyruvate</name>
        <dbReference type="ChEBI" id="CHEBI:58702"/>
    </ligand>
</feature>
<feature type="binding site" evidence="1">
    <location>
        <position position="100"/>
    </location>
    <ligand>
        <name>UDP-N-acetyl-alpha-D-glucosamine</name>
        <dbReference type="ChEBI" id="CHEBI:57705"/>
    </ligand>
</feature>
<feature type="binding site" evidence="1">
    <location>
        <begin position="169"/>
        <end position="172"/>
    </location>
    <ligand>
        <name>UDP-N-acetyl-alpha-D-glucosamine</name>
        <dbReference type="ChEBI" id="CHEBI:57705"/>
    </ligand>
</feature>
<feature type="binding site" evidence="1">
    <location>
        <position position="313"/>
    </location>
    <ligand>
        <name>UDP-N-acetyl-alpha-D-glucosamine</name>
        <dbReference type="ChEBI" id="CHEBI:57705"/>
    </ligand>
</feature>
<feature type="binding site" evidence="1">
    <location>
        <position position="335"/>
    </location>
    <ligand>
        <name>UDP-N-acetyl-alpha-D-glucosamine</name>
        <dbReference type="ChEBI" id="CHEBI:57705"/>
    </ligand>
</feature>
<feature type="modified residue" description="2-(S-cysteinyl)pyruvic acid O-phosphothioketal" evidence="1">
    <location>
        <position position="124"/>
    </location>
</feature>
<accession>B3CLV0</accession>
<protein>
    <recommendedName>
        <fullName evidence="1">UDP-N-acetylglucosamine 1-carboxyvinyltransferase</fullName>
        <ecNumber evidence="1">2.5.1.7</ecNumber>
    </recommendedName>
    <alternativeName>
        <fullName evidence="1">Enoylpyruvate transferase</fullName>
    </alternativeName>
    <alternativeName>
        <fullName evidence="1">UDP-N-acetylglucosamine enolpyruvyl transferase</fullName>
        <shortName evidence="1">EPT</shortName>
    </alternativeName>
</protein>
<evidence type="ECO:0000255" key="1">
    <source>
        <dbReference type="HAMAP-Rule" id="MF_00111"/>
    </source>
</evidence>
<reference key="1">
    <citation type="journal article" date="2008" name="Mol. Biol. Evol.">
        <title>Genome evolution of Wolbachia strain wPip from the Culex pipiens group.</title>
        <authorList>
            <person name="Klasson L."/>
            <person name="Walker T."/>
            <person name="Sebaihia M."/>
            <person name="Sanders M.J."/>
            <person name="Quail M.A."/>
            <person name="Lord A."/>
            <person name="Sanders S."/>
            <person name="Earl J."/>
            <person name="O'Neill S.L."/>
            <person name="Thomson N."/>
            <person name="Sinkins S.P."/>
            <person name="Parkhill J."/>
        </authorList>
    </citation>
    <scope>NUCLEOTIDE SEQUENCE [LARGE SCALE GENOMIC DNA]</scope>
    <source>
        <strain>wPip</strain>
    </source>
</reference>
<comment type="function">
    <text evidence="1">Cell wall formation. Adds enolpyruvyl to UDP-N-acetylglucosamine.</text>
</comment>
<comment type="catalytic activity">
    <reaction evidence="1">
        <text>phosphoenolpyruvate + UDP-N-acetyl-alpha-D-glucosamine = UDP-N-acetyl-3-O-(1-carboxyvinyl)-alpha-D-glucosamine + phosphate</text>
        <dbReference type="Rhea" id="RHEA:18681"/>
        <dbReference type="ChEBI" id="CHEBI:43474"/>
        <dbReference type="ChEBI" id="CHEBI:57705"/>
        <dbReference type="ChEBI" id="CHEBI:58702"/>
        <dbReference type="ChEBI" id="CHEBI:68483"/>
        <dbReference type="EC" id="2.5.1.7"/>
    </reaction>
</comment>
<comment type="pathway">
    <text evidence="1">Cell wall biogenesis; peptidoglycan biosynthesis.</text>
</comment>
<comment type="subcellular location">
    <subcellularLocation>
        <location evidence="1">Cytoplasm</location>
    </subcellularLocation>
</comment>
<comment type="similarity">
    <text evidence="1">Belongs to the EPSP synthase family. MurA subfamily.</text>
</comment>
<proteinExistence type="inferred from homology"/>
<organism>
    <name type="scientific">Wolbachia pipientis subsp. Culex pipiens (strain wPip)</name>
    <dbReference type="NCBI Taxonomy" id="570417"/>
    <lineage>
        <taxon>Bacteria</taxon>
        <taxon>Pseudomonadati</taxon>
        <taxon>Pseudomonadota</taxon>
        <taxon>Alphaproteobacteria</taxon>
        <taxon>Rickettsiales</taxon>
        <taxon>Anaplasmataceae</taxon>
        <taxon>Wolbachieae</taxon>
        <taxon>Wolbachia</taxon>
    </lineage>
</organism>
<dbReference type="EC" id="2.5.1.7" evidence="1"/>
<dbReference type="EMBL" id="AM999887">
    <property type="protein sequence ID" value="CAQ54868.1"/>
    <property type="molecule type" value="Genomic_DNA"/>
</dbReference>
<dbReference type="RefSeq" id="WP_012481905.1">
    <property type="nucleotide sequence ID" value="NC_010981.1"/>
</dbReference>
<dbReference type="SMR" id="B3CLV0"/>
<dbReference type="KEGG" id="wpi:WP0760"/>
<dbReference type="eggNOG" id="COG0766">
    <property type="taxonomic scope" value="Bacteria"/>
</dbReference>
<dbReference type="HOGENOM" id="CLU_027387_0_0_5"/>
<dbReference type="UniPathway" id="UPA00219"/>
<dbReference type="Proteomes" id="UP000008814">
    <property type="component" value="Chromosome"/>
</dbReference>
<dbReference type="GO" id="GO:0005737">
    <property type="term" value="C:cytoplasm"/>
    <property type="evidence" value="ECO:0007669"/>
    <property type="project" value="UniProtKB-SubCell"/>
</dbReference>
<dbReference type="GO" id="GO:0008760">
    <property type="term" value="F:UDP-N-acetylglucosamine 1-carboxyvinyltransferase activity"/>
    <property type="evidence" value="ECO:0007669"/>
    <property type="project" value="UniProtKB-UniRule"/>
</dbReference>
<dbReference type="GO" id="GO:0051301">
    <property type="term" value="P:cell division"/>
    <property type="evidence" value="ECO:0007669"/>
    <property type="project" value="UniProtKB-KW"/>
</dbReference>
<dbReference type="GO" id="GO:0071555">
    <property type="term" value="P:cell wall organization"/>
    <property type="evidence" value="ECO:0007669"/>
    <property type="project" value="UniProtKB-KW"/>
</dbReference>
<dbReference type="GO" id="GO:0009252">
    <property type="term" value="P:peptidoglycan biosynthetic process"/>
    <property type="evidence" value="ECO:0007669"/>
    <property type="project" value="UniProtKB-UniRule"/>
</dbReference>
<dbReference type="GO" id="GO:0008360">
    <property type="term" value="P:regulation of cell shape"/>
    <property type="evidence" value="ECO:0007669"/>
    <property type="project" value="UniProtKB-KW"/>
</dbReference>
<dbReference type="GO" id="GO:0019277">
    <property type="term" value="P:UDP-N-acetylgalactosamine biosynthetic process"/>
    <property type="evidence" value="ECO:0007669"/>
    <property type="project" value="InterPro"/>
</dbReference>
<dbReference type="CDD" id="cd01555">
    <property type="entry name" value="UdpNAET"/>
    <property type="match status" value="1"/>
</dbReference>
<dbReference type="Gene3D" id="3.65.10.10">
    <property type="entry name" value="Enolpyruvate transferase domain"/>
    <property type="match status" value="2"/>
</dbReference>
<dbReference type="HAMAP" id="MF_00111">
    <property type="entry name" value="MurA"/>
    <property type="match status" value="1"/>
</dbReference>
<dbReference type="InterPro" id="IPR001986">
    <property type="entry name" value="Enolpyruvate_Tfrase_dom"/>
</dbReference>
<dbReference type="InterPro" id="IPR036968">
    <property type="entry name" value="Enolpyruvate_Tfrase_sf"/>
</dbReference>
<dbReference type="InterPro" id="IPR050068">
    <property type="entry name" value="MurA_subfamily"/>
</dbReference>
<dbReference type="InterPro" id="IPR013792">
    <property type="entry name" value="RNA3'P_cycl/enolpyr_Trfase_a/b"/>
</dbReference>
<dbReference type="InterPro" id="IPR005750">
    <property type="entry name" value="UDP_GlcNAc_COvinyl_MurA"/>
</dbReference>
<dbReference type="NCBIfam" id="TIGR01072">
    <property type="entry name" value="murA"/>
    <property type="match status" value="1"/>
</dbReference>
<dbReference type="NCBIfam" id="NF006873">
    <property type="entry name" value="PRK09369.1"/>
    <property type="match status" value="1"/>
</dbReference>
<dbReference type="PANTHER" id="PTHR43783">
    <property type="entry name" value="UDP-N-ACETYLGLUCOSAMINE 1-CARBOXYVINYLTRANSFERASE"/>
    <property type="match status" value="1"/>
</dbReference>
<dbReference type="PANTHER" id="PTHR43783:SF1">
    <property type="entry name" value="UDP-N-ACETYLGLUCOSAMINE 1-CARBOXYVINYLTRANSFERASE"/>
    <property type="match status" value="1"/>
</dbReference>
<dbReference type="Pfam" id="PF00275">
    <property type="entry name" value="EPSP_synthase"/>
    <property type="match status" value="1"/>
</dbReference>
<dbReference type="SUPFAM" id="SSF55205">
    <property type="entry name" value="EPT/RTPC-like"/>
    <property type="match status" value="1"/>
</dbReference>
<gene>
    <name evidence="1" type="primary">murA</name>
    <name type="ordered locus">WP0760</name>
</gene>
<sequence>MHKILVRSNHKPLIGKIKINGSKNAVLPIMAASLFSNSSITLHNVPDLIDVHLMSELLKSLGAEVNFICNKDYKANHTLEIDCSNINNHLISHEIASRLRASFLMLGPMLSRFGRVSTVFPGGCNIGKRPVDIHIKALEAMGAKIEIDSCNITATTKGKLQGKEITFEKVSVGATENIIMSATLAEGVTTINNAATEPEVLDLIEFLKIMGANIEVNNTKITIEGVEALNGCEHKIIPDRIEAGTYALAAIITDGELKLEGVSLSDIECIANELKTIGARVELHDDGIIISRKNGSIKSAHVATNPYPNFPSDMQPQLMSAMSIAGGISIIEENVFESRFAHANELRKLGANISIEKNKATISGIKSLSGANLHANDLRSTAALILASLVAKGETTINNSHHLWRGYEAMHEKLNSCGADIFVSS</sequence>
<name>MURA_WOLPP</name>